<evidence type="ECO:0000255" key="1">
    <source>
        <dbReference type="HAMAP-Rule" id="MF_00235"/>
    </source>
</evidence>
<evidence type="ECO:0000269" key="2">
    <source>
    </source>
</evidence>
<gene>
    <name evidence="1" type="primary">adk1</name>
    <name type="ordered locus">sll1815</name>
</gene>
<protein>
    <recommendedName>
        <fullName evidence="1">Adenylate kinase 1</fullName>
        <shortName evidence="1">AK 1</shortName>
        <ecNumber evidence="1">2.7.4.3</ecNumber>
    </recommendedName>
    <alternativeName>
        <fullName evidence="1">ATP-AMP transphosphorylase 1</fullName>
    </alternativeName>
    <alternativeName>
        <fullName evidence="1">ATP:AMP phosphotransferase 1</fullName>
    </alternativeName>
    <alternativeName>
        <fullName evidence="1">Adenylate monophosphate kinase 1</fullName>
    </alternativeName>
</protein>
<organism>
    <name type="scientific">Synechocystis sp. (strain ATCC 27184 / PCC 6803 / Kazusa)</name>
    <dbReference type="NCBI Taxonomy" id="1111708"/>
    <lineage>
        <taxon>Bacteria</taxon>
        <taxon>Bacillati</taxon>
        <taxon>Cyanobacteriota</taxon>
        <taxon>Cyanophyceae</taxon>
        <taxon>Synechococcales</taxon>
        <taxon>Merismopediaceae</taxon>
        <taxon>Synechocystis</taxon>
    </lineage>
</organism>
<proteinExistence type="evidence at protein level"/>
<name>KAD1_SYNY3</name>
<reference key="1">
    <citation type="journal article" date="1996" name="DNA Res.">
        <title>Sequence analysis of the genome of the unicellular cyanobacterium Synechocystis sp. strain PCC6803. II. Sequence determination of the entire genome and assignment of potential protein-coding regions.</title>
        <authorList>
            <person name="Kaneko T."/>
            <person name="Sato S."/>
            <person name="Kotani H."/>
            <person name="Tanaka A."/>
            <person name="Asamizu E."/>
            <person name="Nakamura Y."/>
            <person name="Miyajima N."/>
            <person name="Hirosawa M."/>
            <person name="Sugiura M."/>
            <person name="Sasamoto S."/>
            <person name="Kimura T."/>
            <person name="Hosouchi T."/>
            <person name="Matsuno A."/>
            <person name="Muraki A."/>
            <person name="Nakazaki N."/>
            <person name="Naruo K."/>
            <person name="Okumura S."/>
            <person name="Shimpo S."/>
            <person name="Takeuchi C."/>
            <person name="Wada T."/>
            <person name="Watanabe A."/>
            <person name="Yamada M."/>
            <person name="Yasuda M."/>
            <person name="Tabata S."/>
        </authorList>
    </citation>
    <scope>NUCLEOTIDE SEQUENCE [LARGE SCALE GENOMIC DNA]</scope>
    <source>
        <strain>ATCC 27184 / PCC 6803 / Kazusa</strain>
    </source>
</reference>
<reference key="2">
    <citation type="journal article" date="1997" name="Electrophoresis">
        <title>Towards a proteome project of cyanobacterium Synechocystis sp. strain PCC6803: linking 130 protein spots with their respective genes.</title>
        <authorList>
            <person name="Sazuka T."/>
            <person name="Ohara O."/>
        </authorList>
    </citation>
    <scope>PROTEIN SEQUENCE OF 2-21</scope>
</reference>
<keyword id="KW-0067">ATP-binding</keyword>
<keyword id="KW-0963">Cytoplasm</keyword>
<keyword id="KW-0903">Direct protein sequencing</keyword>
<keyword id="KW-0418">Kinase</keyword>
<keyword id="KW-0545">Nucleotide biosynthesis</keyword>
<keyword id="KW-0547">Nucleotide-binding</keyword>
<keyword id="KW-1185">Reference proteome</keyword>
<keyword id="KW-0808">Transferase</keyword>
<comment type="function">
    <text evidence="1">Catalyzes the reversible transfer of the terminal phosphate group between ATP and AMP. Plays an important role in cellular energy homeostasis and in adenine nucleotide metabolism.</text>
</comment>
<comment type="catalytic activity">
    <reaction evidence="1">
        <text>AMP + ATP = 2 ADP</text>
        <dbReference type="Rhea" id="RHEA:12973"/>
        <dbReference type="ChEBI" id="CHEBI:30616"/>
        <dbReference type="ChEBI" id="CHEBI:456215"/>
        <dbReference type="ChEBI" id="CHEBI:456216"/>
        <dbReference type="EC" id="2.7.4.3"/>
    </reaction>
</comment>
<comment type="pathway">
    <text evidence="1">Purine metabolism; AMP biosynthesis via salvage pathway; AMP from ADP: step 1/1.</text>
</comment>
<comment type="subunit">
    <text evidence="1">Monomer.</text>
</comment>
<comment type="subcellular location">
    <subcellularLocation>
        <location evidence="1">Cytoplasm</location>
    </subcellularLocation>
</comment>
<comment type="domain">
    <text evidence="1">Consists of three domains, a large central CORE domain and two small peripheral domains, NMPbind and LID, which undergo movements during catalysis. The LID domain closes over the site of phosphoryl transfer upon ATP binding. Assembling and dissambling the active center during each catalytic cycle provides an effective means to prevent ATP hydrolysis.</text>
</comment>
<comment type="similarity">
    <text evidence="1">Belongs to the adenylate kinase family.</text>
</comment>
<accession>P73302</accession>
<sequence>MAMAKGLIFLGAPGSGKGTQAVGLAETLGIPHISTGDMLRQAIADGTELGNQAKGYMDKGELVPDQLILGLIEERLGHKDAKAGWILDGFPRNVNQAIFLDELLVNIGHRTHWVINLKVPDEVIVERLLARGRADDNETTIRNRLLVYTEQTAPLMAYYQEQGKLYSLDGNQPVEAIATNLEKLVKP</sequence>
<feature type="initiator methionine" description="Removed" evidence="2">
    <location>
        <position position="1"/>
    </location>
</feature>
<feature type="chain" id="PRO_0000158871" description="Adenylate kinase 1">
    <location>
        <begin position="2"/>
        <end position="187"/>
    </location>
</feature>
<feature type="region of interest" description="NMP" evidence="1">
    <location>
        <begin position="34"/>
        <end position="63"/>
    </location>
</feature>
<feature type="region of interest" description="LID" evidence="1">
    <location>
        <begin position="130"/>
        <end position="136"/>
    </location>
</feature>
<feature type="binding site" evidence="1">
    <location>
        <begin position="14"/>
        <end position="19"/>
    </location>
    <ligand>
        <name>ATP</name>
        <dbReference type="ChEBI" id="CHEBI:30616"/>
    </ligand>
</feature>
<feature type="binding site" evidence="1">
    <location>
        <position position="35"/>
    </location>
    <ligand>
        <name>AMP</name>
        <dbReference type="ChEBI" id="CHEBI:456215"/>
    </ligand>
</feature>
<feature type="binding site" evidence="1">
    <location>
        <position position="40"/>
    </location>
    <ligand>
        <name>AMP</name>
        <dbReference type="ChEBI" id="CHEBI:456215"/>
    </ligand>
</feature>
<feature type="binding site" evidence="1">
    <location>
        <begin position="61"/>
        <end position="63"/>
    </location>
    <ligand>
        <name>AMP</name>
        <dbReference type="ChEBI" id="CHEBI:456215"/>
    </ligand>
</feature>
<feature type="binding site" evidence="1">
    <location>
        <begin position="89"/>
        <end position="92"/>
    </location>
    <ligand>
        <name>AMP</name>
        <dbReference type="ChEBI" id="CHEBI:456215"/>
    </ligand>
</feature>
<feature type="binding site" evidence="1">
    <location>
        <position position="96"/>
    </location>
    <ligand>
        <name>AMP</name>
        <dbReference type="ChEBI" id="CHEBI:456215"/>
    </ligand>
</feature>
<feature type="binding site" evidence="1">
    <location>
        <position position="131"/>
    </location>
    <ligand>
        <name>ATP</name>
        <dbReference type="ChEBI" id="CHEBI:30616"/>
    </ligand>
</feature>
<feature type="binding site" evidence="1">
    <location>
        <position position="133"/>
    </location>
    <ligand>
        <name>AMP</name>
        <dbReference type="ChEBI" id="CHEBI:456215"/>
    </ligand>
</feature>
<feature type="binding site" evidence="1">
    <location>
        <position position="144"/>
    </location>
    <ligand>
        <name>AMP</name>
        <dbReference type="ChEBI" id="CHEBI:456215"/>
    </ligand>
</feature>
<feature type="binding site" evidence="1">
    <location>
        <position position="172"/>
    </location>
    <ligand>
        <name>ATP</name>
        <dbReference type="ChEBI" id="CHEBI:30616"/>
    </ligand>
</feature>
<dbReference type="EC" id="2.7.4.3" evidence="1"/>
<dbReference type="EMBL" id="BA000022">
    <property type="protein sequence ID" value="BAA17330.1"/>
    <property type="molecule type" value="Genomic_DNA"/>
</dbReference>
<dbReference type="PIR" id="S77483">
    <property type="entry name" value="S77483"/>
</dbReference>
<dbReference type="SMR" id="P73302"/>
<dbReference type="FunCoup" id="P73302">
    <property type="interactions" value="470"/>
</dbReference>
<dbReference type="STRING" id="1148.gene:10498193"/>
<dbReference type="PaxDb" id="1148-1652408"/>
<dbReference type="EnsemblBacteria" id="BAA17330">
    <property type="protein sequence ID" value="BAA17330"/>
    <property type="gene ID" value="BAA17330"/>
</dbReference>
<dbReference type="KEGG" id="syn:sll1815"/>
<dbReference type="eggNOG" id="COG0563">
    <property type="taxonomic scope" value="Bacteria"/>
</dbReference>
<dbReference type="InParanoid" id="P73302"/>
<dbReference type="PhylomeDB" id="P73302"/>
<dbReference type="UniPathway" id="UPA00588">
    <property type="reaction ID" value="UER00649"/>
</dbReference>
<dbReference type="Proteomes" id="UP000001425">
    <property type="component" value="Chromosome"/>
</dbReference>
<dbReference type="GO" id="GO:0005737">
    <property type="term" value="C:cytoplasm"/>
    <property type="evidence" value="ECO:0000318"/>
    <property type="project" value="GO_Central"/>
</dbReference>
<dbReference type="GO" id="GO:0005829">
    <property type="term" value="C:cytosol"/>
    <property type="evidence" value="ECO:0000318"/>
    <property type="project" value="GO_Central"/>
</dbReference>
<dbReference type="GO" id="GO:0004017">
    <property type="term" value="F:adenylate kinase activity"/>
    <property type="evidence" value="ECO:0000318"/>
    <property type="project" value="GO_Central"/>
</dbReference>
<dbReference type="GO" id="GO:0005524">
    <property type="term" value="F:ATP binding"/>
    <property type="evidence" value="ECO:0007669"/>
    <property type="project" value="UniProtKB-UniRule"/>
</dbReference>
<dbReference type="GO" id="GO:0004550">
    <property type="term" value="F:nucleoside diphosphate kinase activity"/>
    <property type="evidence" value="ECO:0000318"/>
    <property type="project" value="GO_Central"/>
</dbReference>
<dbReference type="GO" id="GO:0044209">
    <property type="term" value="P:AMP salvage"/>
    <property type="evidence" value="ECO:0007669"/>
    <property type="project" value="UniProtKB-UniRule"/>
</dbReference>
<dbReference type="GO" id="GO:0009132">
    <property type="term" value="P:nucleoside diphosphate metabolic process"/>
    <property type="evidence" value="ECO:0000318"/>
    <property type="project" value="GO_Central"/>
</dbReference>
<dbReference type="GO" id="GO:0009123">
    <property type="term" value="P:nucleoside monophosphate metabolic process"/>
    <property type="evidence" value="ECO:0000318"/>
    <property type="project" value="GO_Central"/>
</dbReference>
<dbReference type="CDD" id="cd01428">
    <property type="entry name" value="ADK"/>
    <property type="match status" value="1"/>
</dbReference>
<dbReference type="Gene3D" id="3.40.50.300">
    <property type="entry name" value="P-loop containing nucleotide triphosphate hydrolases"/>
    <property type="match status" value="1"/>
</dbReference>
<dbReference type="HAMAP" id="MF_00235">
    <property type="entry name" value="Adenylate_kinase_Adk"/>
    <property type="match status" value="1"/>
</dbReference>
<dbReference type="InterPro" id="IPR006259">
    <property type="entry name" value="Adenyl_kin_sub"/>
</dbReference>
<dbReference type="InterPro" id="IPR000850">
    <property type="entry name" value="Adenylat/UMP-CMP_kin"/>
</dbReference>
<dbReference type="InterPro" id="IPR033690">
    <property type="entry name" value="Adenylat_kinase_CS"/>
</dbReference>
<dbReference type="InterPro" id="IPR027417">
    <property type="entry name" value="P-loop_NTPase"/>
</dbReference>
<dbReference type="NCBIfam" id="TIGR01351">
    <property type="entry name" value="adk"/>
    <property type="match status" value="1"/>
</dbReference>
<dbReference type="NCBIfam" id="NF001381">
    <property type="entry name" value="PRK00279.1-3"/>
    <property type="match status" value="1"/>
</dbReference>
<dbReference type="NCBIfam" id="NF002700">
    <property type="entry name" value="PRK02496.1"/>
    <property type="match status" value="1"/>
</dbReference>
<dbReference type="NCBIfam" id="NF011100">
    <property type="entry name" value="PRK14527.1"/>
    <property type="match status" value="1"/>
</dbReference>
<dbReference type="NCBIfam" id="NF011104">
    <property type="entry name" value="PRK14531.1"/>
    <property type="match status" value="1"/>
</dbReference>
<dbReference type="NCBIfam" id="NF011105">
    <property type="entry name" value="PRK14532.1"/>
    <property type="match status" value="1"/>
</dbReference>
<dbReference type="PANTHER" id="PTHR23359">
    <property type="entry name" value="NUCLEOTIDE KINASE"/>
    <property type="match status" value="1"/>
</dbReference>
<dbReference type="Pfam" id="PF00406">
    <property type="entry name" value="ADK"/>
    <property type="match status" value="1"/>
</dbReference>
<dbReference type="PRINTS" id="PR00094">
    <property type="entry name" value="ADENYLTKNASE"/>
</dbReference>
<dbReference type="SUPFAM" id="SSF52540">
    <property type="entry name" value="P-loop containing nucleoside triphosphate hydrolases"/>
    <property type="match status" value="1"/>
</dbReference>
<dbReference type="PROSITE" id="PS00113">
    <property type="entry name" value="ADENYLATE_KINASE"/>
    <property type="match status" value="1"/>
</dbReference>